<dbReference type="EMBL" id="AL162459">
    <property type="protein sequence ID" value="CAB82823.1"/>
    <property type="molecule type" value="Genomic_DNA"/>
</dbReference>
<dbReference type="EMBL" id="CP002686">
    <property type="protein sequence ID" value="AEE78098.1"/>
    <property type="molecule type" value="Genomic_DNA"/>
</dbReference>
<dbReference type="PIR" id="T47539">
    <property type="entry name" value="T47539"/>
</dbReference>
<dbReference type="RefSeq" id="NP_190185.1">
    <property type="nucleotide sequence ID" value="NM_114468.1"/>
</dbReference>
<dbReference type="SMR" id="Q9LZT3"/>
<dbReference type="FunCoup" id="Q9LZT3">
    <property type="interactions" value="2174"/>
</dbReference>
<dbReference type="STRING" id="3702.Q9LZT3"/>
<dbReference type="PaxDb" id="3702-AT3G45990.1"/>
<dbReference type="EnsemblPlants" id="AT3G45990.1">
    <property type="protein sequence ID" value="AT3G45990.1"/>
    <property type="gene ID" value="AT3G45990"/>
</dbReference>
<dbReference type="GeneID" id="823742"/>
<dbReference type="Gramene" id="AT3G45990.1">
    <property type="protein sequence ID" value="AT3G45990.1"/>
    <property type="gene ID" value="AT3G45990"/>
</dbReference>
<dbReference type="KEGG" id="ath:AT3G45990"/>
<dbReference type="Araport" id="AT3G45990"/>
<dbReference type="TAIR" id="AT3G45990"/>
<dbReference type="eggNOG" id="KOG1735">
    <property type="taxonomic scope" value="Eukaryota"/>
</dbReference>
<dbReference type="HOGENOM" id="CLU_094004_2_2_1"/>
<dbReference type="InParanoid" id="Q9LZT3"/>
<dbReference type="OMA" id="QVEFHAT"/>
<dbReference type="PhylomeDB" id="Q9LZT3"/>
<dbReference type="PRO" id="PR:Q9LZT3"/>
<dbReference type="Proteomes" id="UP000006548">
    <property type="component" value="Chromosome 3"/>
</dbReference>
<dbReference type="ExpressionAtlas" id="Q9LZT3">
    <property type="expression patterns" value="baseline and differential"/>
</dbReference>
<dbReference type="GO" id="GO:0015629">
    <property type="term" value="C:actin cytoskeleton"/>
    <property type="evidence" value="ECO:0007669"/>
    <property type="project" value="InterPro"/>
</dbReference>
<dbReference type="GO" id="GO:0005829">
    <property type="term" value="C:cytosol"/>
    <property type="evidence" value="ECO:0007005"/>
    <property type="project" value="TAIR"/>
</dbReference>
<dbReference type="GO" id="GO:0003779">
    <property type="term" value="F:actin binding"/>
    <property type="evidence" value="ECO:0007669"/>
    <property type="project" value="UniProtKB-KW"/>
</dbReference>
<dbReference type="GO" id="GO:0030042">
    <property type="term" value="P:actin filament depolymerization"/>
    <property type="evidence" value="ECO:0007669"/>
    <property type="project" value="InterPro"/>
</dbReference>
<dbReference type="CDD" id="cd11286">
    <property type="entry name" value="ADF_cofilin_like"/>
    <property type="match status" value="1"/>
</dbReference>
<dbReference type="Gene3D" id="3.40.20.10">
    <property type="entry name" value="Severin"/>
    <property type="match status" value="1"/>
</dbReference>
<dbReference type="InterPro" id="IPR002108">
    <property type="entry name" value="ADF-H"/>
</dbReference>
<dbReference type="InterPro" id="IPR029006">
    <property type="entry name" value="ADF-H/Gelsolin-like_dom_sf"/>
</dbReference>
<dbReference type="InterPro" id="IPR017904">
    <property type="entry name" value="ADF/Cofilin"/>
</dbReference>
<dbReference type="PANTHER" id="PTHR11913">
    <property type="entry name" value="COFILIN-RELATED"/>
    <property type="match status" value="1"/>
</dbReference>
<dbReference type="Pfam" id="PF00241">
    <property type="entry name" value="Cofilin_ADF"/>
    <property type="match status" value="1"/>
</dbReference>
<dbReference type="PRINTS" id="PR00006">
    <property type="entry name" value="COFILIN"/>
</dbReference>
<dbReference type="SMART" id="SM00102">
    <property type="entry name" value="ADF"/>
    <property type="match status" value="1"/>
</dbReference>
<dbReference type="SUPFAM" id="SSF55753">
    <property type="entry name" value="Actin depolymerizing proteins"/>
    <property type="match status" value="1"/>
</dbReference>
<dbReference type="PROSITE" id="PS51263">
    <property type="entry name" value="ADF_H"/>
    <property type="match status" value="1"/>
</dbReference>
<proteinExistence type="inferred from homology"/>
<keyword id="KW-0009">Actin-binding</keyword>
<keyword id="KW-0963">Cytoplasm</keyword>
<keyword id="KW-0206">Cytoskeleton</keyword>
<keyword id="KW-1185">Reference proteome</keyword>
<organism>
    <name type="scientific">Arabidopsis thaliana</name>
    <name type="common">Mouse-ear cress</name>
    <dbReference type="NCBI Taxonomy" id="3702"/>
    <lineage>
        <taxon>Eukaryota</taxon>
        <taxon>Viridiplantae</taxon>
        <taxon>Streptophyta</taxon>
        <taxon>Embryophyta</taxon>
        <taxon>Tracheophyta</taxon>
        <taxon>Spermatophyta</taxon>
        <taxon>Magnoliopsida</taxon>
        <taxon>eudicotyledons</taxon>
        <taxon>Gunneridae</taxon>
        <taxon>Pentapetalae</taxon>
        <taxon>rosids</taxon>
        <taxon>malvids</taxon>
        <taxon>Brassicales</taxon>
        <taxon>Brassicaceae</taxon>
        <taxon>Camelineae</taxon>
        <taxon>Arabidopsis</taxon>
    </lineage>
</organism>
<gene>
    <name type="primary">ADF11</name>
    <name type="ordered locus">At3g45990</name>
    <name type="ORF">F16L2.200</name>
</gene>
<reference key="1">
    <citation type="journal article" date="2000" name="Nature">
        <title>Sequence and analysis of chromosome 3 of the plant Arabidopsis thaliana.</title>
        <authorList>
            <person name="Salanoubat M."/>
            <person name="Lemcke K."/>
            <person name="Rieger M."/>
            <person name="Ansorge W."/>
            <person name="Unseld M."/>
            <person name="Fartmann B."/>
            <person name="Valle G."/>
            <person name="Bloecker H."/>
            <person name="Perez-Alonso M."/>
            <person name="Obermaier B."/>
            <person name="Delseny M."/>
            <person name="Boutry M."/>
            <person name="Grivell L.A."/>
            <person name="Mache R."/>
            <person name="Puigdomenech P."/>
            <person name="De Simone V."/>
            <person name="Choisne N."/>
            <person name="Artiguenave F."/>
            <person name="Robert C."/>
            <person name="Brottier P."/>
            <person name="Wincker P."/>
            <person name="Cattolico L."/>
            <person name="Weissenbach J."/>
            <person name="Saurin W."/>
            <person name="Quetier F."/>
            <person name="Schaefer M."/>
            <person name="Mueller-Auer S."/>
            <person name="Gabel C."/>
            <person name="Fuchs M."/>
            <person name="Benes V."/>
            <person name="Wurmbach E."/>
            <person name="Drzonek H."/>
            <person name="Erfle H."/>
            <person name="Jordan N."/>
            <person name="Bangert S."/>
            <person name="Wiedelmann R."/>
            <person name="Kranz H."/>
            <person name="Voss H."/>
            <person name="Holland R."/>
            <person name="Brandt P."/>
            <person name="Nyakatura G."/>
            <person name="Vezzi A."/>
            <person name="D'Angelo M."/>
            <person name="Pallavicini A."/>
            <person name="Toppo S."/>
            <person name="Simionati B."/>
            <person name="Conrad A."/>
            <person name="Hornischer K."/>
            <person name="Kauer G."/>
            <person name="Loehnert T.-H."/>
            <person name="Nordsiek G."/>
            <person name="Reichelt J."/>
            <person name="Scharfe M."/>
            <person name="Schoen O."/>
            <person name="Bargues M."/>
            <person name="Terol J."/>
            <person name="Climent J."/>
            <person name="Navarro P."/>
            <person name="Collado C."/>
            <person name="Perez-Perez A."/>
            <person name="Ottenwaelder B."/>
            <person name="Duchemin D."/>
            <person name="Cooke R."/>
            <person name="Laudie M."/>
            <person name="Berger-Llauro C."/>
            <person name="Purnelle B."/>
            <person name="Masuy D."/>
            <person name="de Haan M."/>
            <person name="Maarse A.C."/>
            <person name="Alcaraz J.-P."/>
            <person name="Cottet A."/>
            <person name="Casacuberta E."/>
            <person name="Monfort A."/>
            <person name="Argiriou A."/>
            <person name="Flores M."/>
            <person name="Liguori R."/>
            <person name="Vitale D."/>
            <person name="Mannhaupt G."/>
            <person name="Haase D."/>
            <person name="Schoof H."/>
            <person name="Rudd S."/>
            <person name="Zaccaria P."/>
            <person name="Mewes H.-W."/>
            <person name="Mayer K.F.X."/>
            <person name="Kaul S."/>
            <person name="Town C.D."/>
            <person name="Koo H.L."/>
            <person name="Tallon L.J."/>
            <person name="Jenkins J."/>
            <person name="Rooney T."/>
            <person name="Rizzo M."/>
            <person name="Walts A."/>
            <person name="Utterback T."/>
            <person name="Fujii C.Y."/>
            <person name="Shea T.P."/>
            <person name="Creasy T.H."/>
            <person name="Haas B."/>
            <person name="Maiti R."/>
            <person name="Wu D."/>
            <person name="Peterson J."/>
            <person name="Van Aken S."/>
            <person name="Pai G."/>
            <person name="Militscher J."/>
            <person name="Sellers P."/>
            <person name="Gill J.E."/>
            <person name="Feldblyum T.V."/>
            <person name="Preuss D."/>
            <person name="Lin X."/>
            <person name="Nierman W.C."/>
            <person name="Salzberg S.L."/>
            <person name="White O."/>
            <person name="Venter J.C."/>
            <person name="Fraser C.M."/>
            <person name="Kaneko T."/>
            <person name="Nakamura Y."/>
            <person name="Sato S."/>
            <person name="Kato T."/>
            <person name="Asamizu E."/>
            <person name="Sasamoto S."/>
            <person name="Kimura T."/>
            <person name="Idesawa K."/>
            <person name="Kawashima K."/>
            <person name="Kishida Y."/>
            <person name="Kiyokawa C."/>
            <person name="Kohara M."/>
            <person name="Matsumoto M."/>
            <person name="Matsuno A."/>
            <person name="Muraki A."/>
            <person name="Nakayama S."/>
            <person name="Nakazaki N."/>
            <person name="Shinpo S."/>
            <person name="Takeuchi C."/>
            <person name="Wada T."/>
            <person name="Watanabe A."/>
            <person name="Yamada M."/>
            <person name="Yasuda M."/>
            <person name="Tabata S."/>
        </authorList>
    </citation>
    <scope>NUCLEOTIDE SEQUENCE [LARGE SCALE GENOMIC DNA]</scope>
    <source>
        <strain>cv. Columbia</strain>
    </source>
</reference>
<reference key="2">
    <citation type="journal article" date="2017" name="Plant J.">
        <title>Araport11: a complete reannotation of the Arabidopsis thaliana reference genome.</title>
        <authorList>
            <person name="Cheng C.Y."/>
            <person name="Krishnakumar V."/>
            <person name="Chan A.P."/>
            <person name="Thibaud-Nissen F."/>
            <person name="Schobel S."/>
            <person name="Town C.D."/>
        </authorList>
    </citation>
    <scope>GENOME REANNOTATION</scope>
    <source>
        <strain>cv. Columbia</strain>
    </source>
</reference>
<reference key="3">
    <citation type="journal article" date="2006" name="J. Plant Physiol.">
        <title>Comparative study of rice and Arabidopsis actin-depolymerizing factors gene families.</title>
        <authorList>
            <person name="Feng Y."/>
            <person name="Liu Q."/>
            <person name="Xue Q."/>
        </authorList>
    </citation>
    <scope>GENE FAMILY</scope>
</reference>
<accession>Q9LZT3</accession>
<protein>
    <recommendedName>
        <fullName>Putative actin-depolymerizing factor 11</fullName>
        <shortName>ADF-11</shortName>
        <shortName>AtADF11</shortName>
    </recommendedName>
</protein>
<feature type="chain" id="PRO_0000278102" description="Putative actin-depolymerizing factor 11">
    <location>
        <begin position="1"/>
        <end position="133"/>
    </location>
</feature>
<feature type="domain" description="ADF-H" evidence="3">
    <location>
        <begin position="1"/>
        <end position="133"/>
    </location>
</feature>
<comment type="function">
    <text evidence="2">Actin-depolymerizing protein. Severs actin filaments (F-actin) and binds to actin monomers.</text>
</comment>
<comment type="subcellular location">
    <subcellularLocation>
        <location evidence="1">Cytoplasm</location>
        <location evidence="1">Cytoskeleton</location>
    </subcellularLocation>
</comment>
<comment type="similarity">
    <text evidence="4">Belongs to the actin-binding proteins ADF family.</text>
</comment>
<name>ADF11_ARATH</name>
<sequence>MVLHDDCKLTFLELKERRTFRSIVYKIEDNMQVIVEKHHYKKMHGEREQSYEEFANSLPADECRYAILDIEFVPGERKICFIAWSPSTAKMRKKMIYSSTKDRFKRELDGIQVEFHATDLTDISLDAIRRRIN</sequence>
<evidence type="ECO:0000250" key="1">
    <source>
        <dbReference type="UniProtKB" id="O49606"/>
    </source>
</evidence>
<evidence type="ECO:0000250" key="2">
    <source>
        <dbReference type="UniProtKB" id="Q39251"/>
    </source>
</evidence>
<evidence type="ECO:0000255" key="3">
    <source>
        <dbReference type="PROSITE-ProRule" id="PRU00599"/>
    </source>
</evidence>
<evidence type="ECO:0000305" key="4"/>